<gene>
    <name type="primary">exp8</name>
    <name type="ordered locus">SP_1839</name>
</gene>
<dbReference type="EMBL" id="AE005672">
    <property type="protein sequence ID" value="AAK75912.1"/>
    <property type="molecule type" value="Genomic_DNA"/>
</dbReference>
<dbReference type="EMBL" id="L20562">
    <property type="protein sequence ID" value="AAA26884.1"/>
    <property type="status" value="ALT_TERM"/>
    <property type="molecule type" value="Genomic_DNA"/>
</dbReference>
<dbReference type="PIR" id="G95214">
    <property type="entry name" value="G95214"/>
</dbReference>
<dbReference type="RefSeq" id="WP_001180176.1">
    <property type="nucleotide sequence ID" value="NC_003028.3"/>
</dbReference>
<dbReference type="SMR" id="P35598"/>
<dbReference type="PaxDb" id="170187-SP_1839"/>
<dbReference type="EnsemblBacteria" id="AAK75912">
    <property type="protein sequence ID" value="AAK75912"/>
    <property type="gene ID" value="SP_1839"/>
</dbReference>
<dbReference type="KEGG" id="spn:SP_1839"/>
<dbReference type="eggNOG" id="COG1132">
    <property type="taxonomic scope" value="Bacteria"/>
</dbReference>
<dbReference type="PhylomeDB" id="P35598"/>
<dbReference type="BioCyc" id="SPNE170187:G1FZB-1868-MONOMER"/>
<dbReference type="Proteomes" id="UP000000585">
    <property type="component" value="Chromosome"/>
</dbReference>
<dbReference type="GO" id="GO:0005886">
    <property type="term" value="C:plasma membrane"/>
    <property type="evidence" value="ECO:0007669"/>
    <property type="project" value="UniProtKB-SubCell"/>
</dbReference>
<dbReference type="GO" id="GO:0015421">
    <property type="term" value="F:ABC-type oligopeptide transporter activity"/>
    <property type="evidence" value="ECO:0007669"/>
    <property type="project" value="TreeGrafter"/>
</dbReference>
<dbReference type="GO" id="GO:0005524">
    <property type="term" value="F:ATP binding"/>
    <property type="evidence" value="ECO:0007669"/>
    <property type="project" value="UniProtKB-KW"/>
</dbReference>
<dbReference type="GO" id="GO:0016887">
    <property type="term" value="F:ATP hydrolysis activity"/>
    <property type="evidence" value="ECO:0007669"/>
    <property type="project" value="InterPro"/>
</dbReference>
<dbReference type="CDD" id="cd18544">
    <property type="entry name" value="ABC_6TM_TmrA_like"/>
    <property type="match status" value="1"/>
</dbReference>
<dbReference type="CDD" id="cd03254">
    <property type="entry name" value="ABCC_Glucan_exporter_like"/>
    <property type="match status" value="1"/>
</dbReference>
<dbReference type="FunFam" id="1.20.1560.10:FF:000116">
    <property type="entry name" value="Multidrug ABC transporter ATP-binding protein"/>
    <property type="match status" value="1"/>
</dbReference>
<dbReference type="FunFam" id="3.40.50.300:FF:000287">
    <property type="entry name" value="Multidrug ABC transporter ATP-binding protein"/>
    <property type="match status" value="1"/>
</dbReference>
<dbReference type="Gene3D" id="1.20.1560.10">
    <property type="entry name" value="ABC transporter type 1, transmembrane domain"/>
    <property type="match status" value="1"/>
</dbReference>
<dbReference type="Gene3D" id="3.40.50.300">
    <property type="entry name" value="P-loop containing nucleotide triphosphate hydrolases"/>
    <property type="match status" value="1"/>
</dbReference>
<dbReference type="InterPro" id="IPR003593">
    <property type="entry name" value="AAA+_ATPase"/>
</dbReference>
<dbReference type="InterPro" id="IPR011527">
    <property type="entry name" value="ABC1_TM_dom"/>
</dbReference>
<dbReference type="InterPro" id="IPR036640">
    <property type="entry name" value="ABC1_TM_sf"/>
</dbReference>
<dbReference type="InterPro" id="IPR003439">
    <property type="entry name" value="ABC_transporter-like_ATP-bd"/>
</dbReference>
<dbReference type="InterPro" id="IPR027417">
    <property type="entry name" value="P-loop_NTPase"/>
</dbReference>
<dbReference type="InterPro" id="IPR039421">
    <property type="entry name" value="Type_1_exporter"/>
</dbReference>
<dbReference type="PANTHER" id="PTHR43394:SF1">
    <property type="entry name" value="ATP-BINDING CASSETTE SUB-FAMILY B MEMBER 10, MITOCHONDRIAL"/>
    <property type="match status" value="1"/>
</dbReference>
<dbReference type="PANTHER" id="PTHR43394">
    <property type="entry name" value="ATP-DEPENDENT PERMEASE MDL1, MITOCHONDRIAL"/>
    <property type="match status" value="1"/>
</dbReference>
<dbReference type="Pfam" id="PF00664">
    <property type="entry name" value="ABC_membrane"/>
    <property type="match status" value="1"/>
</dbReference>
<dbReference type="Pfam" id="PF00005">
    <property type="entry name" value="ABC_tran"/>
    <property type="match status" value="1"/>
</dbReference>
<dbReference type="SMART" id="SM00382">
    <property type="entry name" value="AAA"/>
    <property type="match status" value="1"/>
</dbReference>
<dbReference type="SUPFAM" id="SSF90123">
    <property type="entry name" value="ABC transporter transmembrane region"/>
    <property type="match status" value="1"/>
</dbReference>
<dbReference type="SUPFAM" id="SSF52540">
    <property type="entry name" value="P-loop containing nucleoside triphosphate hydrolases"/>
    <property type="match status" value="1"/>
</dbReference>
<dbReference type="PROSITE" id="PS50929">
    <property type="entry name" value="ABC_TM1F"/>
    <property type="match status" value="1"/>
</dbReference>
<dbReference type="PROSITE" id="PS50893">
    <property type="entry name" value="ABC_TRANSPORTER_2"/>
    <property type="match status" value="1"/>
</dbReference>
<name>EXP8_STRPN</name>
<evidence type="ECO:0000255" key="1">
    <source>
        <dbReference type="PROSITE-ProRule" id="PRU00434"/>
    </source>
</evidence>
<evidence type="ECO:0000255" key="2">
    <source>
        <dbReference type="PROSITE-ProRule" id="PRU00441"/>
    </source>
</evidence>
<evidence type="ECO:0000305" key="3"/>
<keyword id="KW-0067">ATP-binding</keyword>
<keyword id="KW-1003">Cell membrane</keyword>
<keyword id="KW-0472">Membrane</keyword>
<keyword id="KW-0547">Nucleotide-binding</keyword>
<keyword id="KW-1185">Reference proteome</keyword>
<keyword id="KW-0812">Transmembrane</keyword>
<keyword id="KW-1133">Transmembrane helix</keyword>
<keyword id="KW-0813">Transport</keyword>
<proteinExistence type="inferred from homology"/>
<feature type="chain" id="PRO_0000092322" description="Putative ABC transporter ATP-binding protein exp8">
    <location>
        <begin position="1"/>
        <end position="583"/>
    </location>
</feature>
<feature type="transmembrane region" description="Helical" evidence="2">
    <location>
        <begin position="26"/>
        <end position="46"/>
    </location>
</feature>
<feature type="transmembrane region" description="Helical" evidence="2">
    <location>
        <begin position="61"/>
        <end position="81"/>
    </location>
</feature>
<feature type="transmembrane region" description="Helical" evidence="2">
    <location>
        <begin position="135"/>
        <end position="155"/>
    </location>
</feature>
<feature type="transmembrane region" description="Helical" evidence="2">
    <location>
        <begin position="159"/>
        <end position="179"/>
    </location>
</feature>
<feature type="transmembrane region" description="Helical" evidence="2">
    <location>
        <begin position="259"/>
        <end position="279"/>
    </location>
</feature>
<feature type="domain" description="ABC transmembrane type-1" evidence="2">
    <location>
        <begin position="25"/>
        <end position="308"/>
    </location>
</feature>
<feature type="domain" description="ABC transporter" evidence="1">
    <location>
        <begin position="341"/>
        <end position="574"/>
    </location>
</feature>
<feature type="binding site" evidence="1">
    <location>
        <begin position="374"/>
        <end position="381"/>
    </location>
    <ligand>
        <name>ATP</name>
        <dbReference type="ChEBI" id="CHEBI:30616"/>
    </ligand>
</feature>
<feature type="sequence conflict" description="In Ref. 2; AAA26884." evidence="3" ref="2">
    <original>T</original>
    <variation>I</variation>
    <location>
        <position position="441"/>
    </location>
</feature>
<protein>
    <recommendedName>
        <fullName>Putative ABC transporter ATP-binding protein exp8</fullName>
    </recommendedName>
    <alternativeName>
        <fullName>Exported protein 8</fullName>
    </alternativeName>
</protein>
<comment type="subcellular location">
    <subcellularLocation>
        <location evidence="3">Cell membrane</location>
        <topology evidence="2">Multi-pass membrane protein</topology>
    </subcellularLocation>
</comment>
<comment type="similarity">
    <text evidence="3">Belongs to the ABC transporter superfamily.</text>
</comment>
<comment type="sequence caution" evidence="3">
    <conflict type="miscellaneous discrepancy">
        <sequence resource="EMBL-CDS" id="AAA26884"/>
    </conflict>
    <text>Contaminating sequence. Vector contamination at the N-terminus, a segment of 26 residues, which seems to originate from a pUC-type vector.</text>
</comment>
<organism>
    <name type="scientific">Streptococcus pneumoniae serotype 4 (strain ATCC BAA-334 / TIGR4)</name>
    <dbReference type="NCBI Taxonomy" id="170187"/>
    <lineage>
        <taxon>Bacteria</taxon>
        <taxon>Bacillati</taxon>
        <taxon>Bacillota</taxon>
        <taxon>Bacilli</taxon>
        <taxon>Lactobacillales</taxon>
        <taxon>Streptococcaceae</taxon>
        <taxon>Streptococcus</taxon>
    </lineage>
</organism>
<reference key="1">
    <citation type="journal article" date="2001" name="Science">
        <title>Complete genome sequence of a virulent isolate of Streptococcus pneumoniae.</title>
        <authorList>
            <person name="Tettelin H."/>
            <person name="Nelson K.E."/>
            <person name="Paulsen I.T."/>
            <person name="Eisen J.A."/>
            <person name="Read T.D."/>
            <person name="Peterson S.N."/>
            <person name="Heidelberg J.F."/>
            <person name="DeBoy R.T."/>
            <person name="Haft D.H."/>
            <person name="Dodson R.J."/>
            <person name="Durkin A.S."/>
            <person name="Gwinn M.L."/>
            <person name="Kolonay J.F."/>
            <person name="Nelson W.C."/>
            <person name="Peterson J.D."/>
            <person name="Umayam L.A."/>
            <person name="White O."/>
            <person name="Salzberg S.L."/>
            <person name="Lewis M.R."/>
            <person name="Radune D."/>
            <person name="Holtzapple E.K."/>
            <person name="Khouri H.M."/>
            <person name="Wolf A.M."/>
            <person name="Utterback T.R."/>
            <person name="Hansen C.L."/>
            <person name="McDonald L.A."/>
            <person name="Feldblyum T.V."/>
            <person name="Angiuoli S.V."/>
            <person name="Dickinson T."/>
            <person name="Hickey E.K."/>
            <person name="Holt I.E."/>
            <person name="Loftus B.J."/>
            <person name="Yang F."/>
            <person name="Smith H.O."/>
            <person name="Venter J.C."/>
            <person name="Dougherty B.A."/>
            <person name="Morrison D.A."/>
            <person name="Hollingshead S.K."/>
            <person name="Fraser C.M."/>
        </authorList>
    </citation>
    <scope>NUCLEOTIDE SEQUENCE [LARGE SCALE GENOMIC DNA]</scope>
    <source>
        <strain>ATCC BAA-334 / TIGR4</strain>
    </source>
</reference>
<reference key="2">
    <citation type="journal article" date="1993" name="Mol. Microbiol.">
        <title>Genetic identification of exported proteins in Streptococcus pneumoniae.</title>
        <authorList>
            <person name="Pearce B.J."/>
            <person name="Yin Y.B."/>
            <person name="Masure H.R."/>
        </authorList>
    </citation>
    <scope>NUCLEOTIDE SEQUENCE [GENOMIC DNA] OF 413-482</scope>
    <source>
        <strain>R6x</strain>
    </source>
</reference>
<reference key="3">
    <citation type="unpublished observations" date="1994-11">
        <authorList>
            <person name="Robison K."/>
        </authorList>
    </citation>
    <scope>IDENTIFICATION OF PROBABLE VECTOR CONTAMINATION</scope>
</reference>
<sequence>MQNKQEQWTVLKRLMSYLKPYGLLTFLALSFLLATTVIKSVIPLVASHFIDQYLSNLNQLAVTVLLVYYGLYILQTVVQYVGNLLFARVSYSIVRDIRRDAFANMEKLGMSYFDKTPAGSIVSRLTNDTETISDMFSGILSSFISAVFIFLTTLYTMLVLDFRLTALVLLFLPLIFLLVNLYRKKSVKIIEKTRSLLSDINSKLAENIEGIRIIQAFNQEKRLQAEFDEINQEHLVYANRSVALDALFLRPAMSLLKLLGYAVLMAYFGYRGFSIGITVGTMYAFIQYINRLFDPLIEVTQNFSTLQTAMVSAGRVFALIDERTYEPLQENGQAKVQEGNIRFEHVCFSYDGKHPILDDISFSVNKGETIAFVGHTGSGKSSIINVLMRFYEFQSGRVLLDDVDIRDFSQEELRKNIGLVLQEPFLYHGTIKSNIAMYQETSDEQVQAAAAFVDADSFIQELPQGYDSPVSERGSSFSTGQRQLLAFARTVASQPKILILDEATANIDSETESLVQASLAKMRQGRTTIAIAHRLSTIQDANCIYVLDKGRIIESGTHEELLALGGTYHKMYSLQAGAMADTL</sequence>
<accession>P35598</accession>